<gene>
    <name evidence="1" type="primary">folD</name>
    <name type="ordered locus">BCAH187_A4311</name>
</gene>
<feature type="chain" id="PRO_1000147441" description="Bifunctional protein FolD">
    <location>
        <begin position="1"/>
        <end position="286"/>
    </location>
</feature>
<feature type="binding site" evidence="1">
    <location>
        <begin position="165"/>
        <end position="167"/>
    </location>
    <ligand>
        <name>NADP(+)</name>
        <dbReference type="ChEBI" id="CHEBI:58349"/>
    </ligand>
</feature>
<feature type="binding site" evidence="1">
    <location>
        <position position="190"/>
    </location>
    <ligand>
        <name>NADP(+)</name>
        <dbReference type="ChEBI" id="CHEBI:58349"/>
    </ligand>
</feature>
<feature type="binding site" evidence="1">
    <location>
        <position position="231"/>
    </location>
    <ligand>
        <name>NADP(+)</name>
        <dbReference type="ChEBI" id="CHEBI:58349"/>
    </ligand>
</feature>
<sequence>MVAVIIKGNEVAEKKRAQLTEEVVKLKEQGIVPGLAVILVGEDPASRSYVKGKEKGCEQVGIYSELIEFPETITEERLLAEIDRLNGDDRINGILVQLPLPKHIEEKAIIERISPEKDVDGFHPISVGRMMTGQDTFLPCTPHGIVELVKETNLDISGKHVVVIGRSNIVGKPVGQLFLNENATVTYCHSKTQNMKELTKLADILIVAVGRPKMVTADYIKEGAVVIDVGVNRLETGKLCGDVDFDNVLDVAGYITPVPKGVGPMTITMLLHNTVESAKRAGVVCK</sequence>
<protein>
    <recommendedName>
        <fullName evidence="1">Bifunctional protein FolD</fullName>
    </recommendedName>
    <domain>
        <recommendedName>
            <fullName evidence="1">Methylenetetrahydrofolate dehydrogenase</fullName>
            <ecNumber evidence="1">1.5.1.5</ecNumber>
        </recommendedName>
    </domain>
    <domain>
        <recommendedName>
            <fullName evidence="1">Methenyltetrahydrofolate cyclohydrolase</fullName>
            <ecNumber evidence="1">3.5.4.9</ecNumber>
        </recommendedName>
    </domain>
</protein>
<comment type="function">
    <text evidence="1">Catalyzes the oxidation of 5,10-methylenetetrahydrofolate to 5,10-methenyltetrahydrofolate and then the hydrolysis of 5,10-methenyltetrahydrofolate to 10-formyltetrahydrofolate.</text>
</comment>
<comment type="catalytic activity">
    <reaction evidence="1">
        <text>(6R)-5,10-methylene-5,6,7,8-tetrahydrofolate + NADP(+) = (6R)-5,10-methenyltetrahydrofolate + NADPH</text>
        <dbReference type="Rhea" id="RHEA:22812"/>
        <dbReference type="ChEBI" id="CHEBI:15636"/>
        <dbReference type="ChEBI" id="CHEBI:57455"/>
        <dbReference type="ChEBI" id="CHEBI:57783"/>
        <dbReference type="ChEBI" id="CHEBI:58349"/>
        <dbReference type="EC" id="1.5.1.5"/>
    </reaction>
</comment>
<comment type="catalytic activity">
    <reaction evidence="1">
        <text>(6R)-5,10-methenyltetrahydrofolate + H2O = (6R)-10-formyltetrahydrofolate + H(+)</text>
        <dbReference type="Rhea" id="RHEA:23700"/>
        <dbReference type="ChEBI" id="CHEBI:15377"/>
        <dbReference type="ChEBI" id="CHEBI:15378"/>
        <dbReference type="ChEBI" id="CHEBI:57455"/>
        <dbReference type="ChEBI" id="CHEBI:195366"/>
        <dbReference type="EC" id="3.5.4.9"/>
    </reaction>
</comment>
<comment type="pathway">
    <text evidence="1">One-carbon metabolism; tetrahydrofolate interconversion.</text>
</comment>
<comment type="subunit">
    <text evidence="1">Homodimer.</text>
</comment>
<comment type="similarity">
    <text evidence="1">Belongs to the tetrahydrofolate dehydrogenase/cyclohydrolase family.</text>
</comment>
<dbReference type="EC" id="1.5.1.5" evidence="1"/>
<dbReference type="EC" id="3.5.4.9" evidence="1"/>
<dbReference type="EMBL" id="CP001177">
    <property type="protein sequence ID" value="ACJ81411.1"/>
    <property type="molecule type" value="Genomic_DNA"/>
</dbReference>
<dbReference type="SMR" id="B7HNU4"/>
<dbReference type="KEGG" id="bcr:BCAH187_A4311"/>
<dbReference type="HOGENOM" id="CLU_034045_2_1_9"/>
<dbReference type="UniPathway" id="UPA00193"/>
<dbReference type="Proteomes" id="UP000002214">
    <property type="component" value="Chromosome"/>
</dbReference>
<dbReference type="GO" id="GO:0005829">
    <property type="term" value="C:cytosol"/>
    <property type="evidence" value="ECO:0007669"/>
    <property type="project" value="TreeGrafter"/>
</dbReference>
<dbReference type="GO" id="GO:0004477">
    <property type="term" value="F:methenyltetrahydrofolate cyclohydrolase activity"/>
    <property type="evidence" value="ECO:0007669"/>
    <property type="project" value="UniProtKB-UniRule"/>
</dbReference>
<dbReference type="GO" id="GO:0004488">
    <property type="term" value="F:methylenetetrahydrofolate dehydrogenase (NADP+) activity"/>
    <property type="evidence" value="ECO:0007669"/>
    <property type="project" value="UniProtKB-UniRule"/>
</dbReference>
<dbReference type="GO" id="GO:0000105">
    <property type="term" value="P:L-histidine biosynthetic process"/>
    <property type="evidence" value="ECO:0007669"/>
    <property type="project" value="UniProtKB-KW"/>
</dbReference>
<dbReference type="GO" id="GO:0009086">
    <property type="term" value="P:methionine biosynthetic process"/>
    <property type="evidence" value="ECO:0007669"/>
    <property type="project" value="UniProtKB-KW"/>
</dbReference>
<dbReference type="GO" id="GO:0006164">
    <property type="term" value="P:purine nucleotide biosynthetic process"/>
    <property type="evidence" value="ECO:0007669"/>
    <property type="project" value="UniProtKB-KW"/>
</dbReference>
<dbReference type="GO" id="GO:0035999">
    <property type="term" value="P:tetrahydrofolate interconversion"/>
    <property type="evidence" value="ECO:0007669"/>
    <property type="project" value="UniProtKB-UniRule"/>
</dbReference>
<dbReference type="CDD" id="cd01080">
    <property type="entry name" value="NAD_bind_m-THF_DH_Cyclohyd"/>
    <property type="match status" value="1"/>
</dbReference>
<dbReference type="FunFam" id="3.40.50.10860:FF:000001">
    <property type="entry name" value="Bifunctional protein FolD"/>
    <property type="match status" value="1"/>
</dbReference>
<dbReference type="FunFam" id="3.40.50.720:FF:000006">
    <property type="entry name" value="Bifunctional protein FolD"/>
    <property type="match status" value="1"/>
</dbReference>
<dbReference type="Gene3D" id="3.40.50.10860">
    <property type="entry name" value="Leucine Dehydrogenase, chain A, domain 1"/>
    <property type="match status" value="1"/>
</dbReference>
<dbReference type="Gene3D" id="3.40.50.720">
    <property type="entry name" value="NAD(P)-binding Rossmann-like Domain"/>
    <property type="match status" value="1"/>
</dbReference>
<dbReference type="HAMAP" id="MF_01576">
    <property type="entry name" value="THF_DHG_CYH"/>
    <property type="match status" value="1"/>
</dbReference>
<dbReference type="InterPro" id="IPR046346">
    <property type="entry name" value="Aminoacid_DH-like_N_sf"/>
</dbReference>
<dbReference type="InterPro" id="IPR036291">
    <property type="entry name" value="NAD(P)-bd_dom_sf"/>
</dbReference>
<dbReference type="InterPro" id="IPR000672">
    <property type="entry name" value="THF_DH/CycHdrlase"/>
</dbReference>
<dbReference type="InterPro" id="IPR020630">
    <property type="entry name" value="THF_DH/CycHdrlase_cat_dom"/>
</dbReference>
<dbReference type="InterPro" id="IPR020867">
    <property type="entry name" value="THF_DH/CycHdrlase_CS"/>
</dbReference>
<dbReference type="InterPro" id="IPR020631">
    <property type="entry name" value="THF_DH/CycHdrlase_NAD-bd_dom"/>
</dbReference>
<dbReference type="NCBIfam" id="NF008058">
    <property type="entry name" value="PRK10792.1"/>
    <property type="match status" value="1"/>
</dbReference>
<dbReference type="NCBIfam" id="NF010783">
    <property type="entry name" value="PRK14186.1"/>
    <property type="match status" value="1"/>
</dbReference>
<dbReference type="PANTHER" id="PTHR48099:SF5">
    <property type="entry name" value="C-1-TETRAHYDROFOLATE SYNTHASE, CYTOPLASMIC"/>
    <property type="match status" value="1"/>
</dbReference>
<dbReference type="PANTHER" id="PTHR48099">
    <property type="entry name" value="C-1-TETRAHYDROFOLATE SYNTHASE, CYTOPLASMIC-RELATED"/>
    <property type="match status" value="1"/>
</dbReference>
<dbReference type="Pfam" id="PF00763">
    <property type="entry name" value="THF_DHG_CYH"/>
    <property type="match status" value="1"/>
</dbReference>
<dbReference type="Pfam" id="PF02882">
    <property type="entry name" value="THF_DHG_CYH_C"/>
    <property type="match status" value="1"/>
</dbReference>
<dbReference type="PRINTS" id="PR00085">
    <property type="entry name" value="THFDHDRGNASE"/>
</dbReference>
<dbReference type="SUPFAM" id="SSF53223">
    <property type="entry name" value="Aminoacid dehydrogenase-like, N-terminal domain"/>
    <property type="match status" value="1"/>
</dbReference>
<dbReference type="SUPFAM" id="SSF51735">
    <property type="entry name" value="NAD(P)-binding Rossmann-fold domains"/>
    <property type="match status" value="1"/>
</dbReference>
<dbReference type="PROSITE" id="PS00767">
    <property type="entry name" value="THF_DHG_CYH_2"/>
    <property type="match status" value="1"/>
</dbReference>
<proteinExistence type="inferred from homology"/>
<reference key="1">
    <citation type="submission" date="2008-10" db="EMBL/GenBank/DDBJ databases">
        <title>Genome sequence of Bacillus cereus AH187.</title>
        <authorList>
            <person name="Dodson R.J."/>
            <person name="Durkin A.S."/>
            <person name="Rosovitz M.J."/>
            <person name="Rasko D.A."/>
            <person name="Kolsto A.B."/>
            <person name="Okstad O.A."/>
            <person name="Ravel J."/>
            <person name="Sutton G."/>
        </authorList>
    </citation>
    <scope>NUCLEOTIDE SEQUENCE [LARGE SCALE GENOMIC DNA]</scope>
    <source>
        <strain>AH187</strain>
    </source>
</reference>
<organism>
    <name type="scientific">Bacillus cereus (strain AH187)</name>
    <dbReference type="NCBI Taxonomy" id="405534"/>
    <lineage>
        <taxon>Bacteria</taxon>
        <taxon>Bacillati</taxon>
        <taxon>Bacillota</taxon>
        <taxon>Bacilli</taxon>
        <taxon>Bacillales</taxon>
        <taxon>Bacillaceae</taxon>
        <taxon>Bacillus</taxon>
        <taxon>Bacillus cereus group</taxon>
    </lineage>
</organism>
<evidence type="ECO:0000255" key="1">
    <source>
        <dbReference type="HAMAP-Rule" id="MF_01576"/>
    </source>
</evidence>
<keyword id="KW-0028">Amino-acid biosynthesis</keyword>
<keyword id="KW-0368">Histidine biosynthesis</keyword>
<keyword id="KW-0378">Hydrolase</keyword>
<keyword id="KW-0486">Methionine biosynthesis</keyword>
<keyword id="KW-0511">Multifunctional enzyme</keyword>
<keyword id="KW-0521">NADP</keyword>
<keyword id="KW-0554">One-carbon metabolism</keyword>
<keyword id="KW-0560">Oxidoreductase</keyword>
<keyword id="KW-0658">Purine biosynthesis</keyword>
<accession>B7HNU4</accession>
<name>FOLD_BACC7</name>